<name>ATG4_KLUMD</name>
<sequence>MEFLTKITQQLGLVGEIDKVGSVFVLGEEYRPYIFKTQGKADDAETAFGSFLGNAQTNPQLLSDIETRIFFTYRTQFTPIPRDEEGPSPINLTLFFRDNPINTLENVLTDPDSFYSDIGWGCMIRTGQSLLANAIQRVKQTREFRVNLENIDIKEMSIIQWFQDDWKYPLSLHNFVKVEGKKSGMKPGQWFGPSSTARSIQSLINDFPDCGIDRCLISPQSADIYEDEMIRVFEENKRANVLLLFATRLGVNEINSIYWSDIFQILKSSYSVGIAGGKPSSSLYFFGYQNDYLFYLDPHQTQSSSLDMDDNSYYRSCHGHRFSKIHISETDPSMLLGMLISGKAEWDLFKDEFKNSRIIQFVASKPSDDIYEGVDLSPGSVSVHSIQSDLQDTGDYIDVGNFMSEKANSSQPSKNEEFENVKCKNQRILICENPSETEIEQVLVEDSTTDN</sequence>
<organism>
    <name type="scientific">Kluyveromyces marxianus (strain DMKU3-1042 / BCC 29191 / NBRC 104275)</name>
    <name type="common">Yeast</name>
    <name type="synonym">Candida kefyr</name>
    <dbReference type="NCBI Taxonomy" id="1003335"/>
    <lineage>
        <taxon>Eukaryota</taxon>
        <taxon>Fungi</taxon>
        <taxon>Dikarya</taxon>
        <taxon>Ascomycota</taxon>
        <taxon>Saccharomycotina</taxon>
        <taxon>Saccharomycetes</taxon>
        <taxon>Saccharomycetales</taxon>
        <taxon>Saccharomycetaceae</taxon>
        <taxon>Kluyveromyces</taxon>
    </lineage>
</organism>
<gene>
    <name evidence="4" type="primary">ATG4</name>
    <name type="ORF">KLMA_50615</name>
</gene>
<reference key="1">
    <citation type="journal article" date="2015" name="Biotechnol. Biofuels">
        <title>Genetic basis of the highly efficient yeast Kluyveromyces marxianus: complete genome sequence and transcriptome analyses.</title>
        <authorList>
            <person name="Lertwattanasakul N."/>
            <person name="Kosaka T."/>
            <person name="Hosoyama A."/>
            <person name="Suzuki Y."/>
            <person name="Rodrussamee N."/>
            <person name="Matsutani M."/>
            <person name="Murata M."/>
            <person name="Fujimoto N."/>
            <person name="Suprayogi X."/>
            <person name="Tsuchikane K."/>
            <person name="Limtong S."/>
            <person name="Fujita N."/>
            <person name="Yamada M."/>
        </authorList>
    </citation>
    <scope>NUCLEOTIDE SEQUENCE [LARGE SCALE GENOMIC DNA]</scope>
    <source>
        <strain>DMKU3-1042 / BCC 29191 / NBRC 104275</strain>
    </source>
</reference>
<reference key="2">
    <citation type="journal article" date="2015" name="J. Biol. Chem.">
        <title>The thermotolerant yeast Kluyveromyces marxianus is a useful organism for structural and biochemical studies of autophagy.</title>
        <authorList>
            <person name="Yamamoto H."/>
            <person name="Shima T."/>
            <person name="Yamaguchi M."/>
            <person name="Mochizuki Y."/>
            <person name="Hoshida H."/>
            <person name="Kakuta S."/>
            <person name="Kondo-Kakuta C."/>
            <person name="Noda N.N."/>
            <person name="Inagaki F."/>
            <person name="Itoh T."/>
            <person name="Akada R."/>
            <person name="Ohsumi Y."/>
        </authorList>
    </citation>
    <scope>IDENTIFICATION</scope>
    <scope>FUNCTION</scope>
    <scope>DISRUPTION PHENOTYPE</scope>
</reference>
<protein>
    <recommendedName>
        <fullName evidence="1">Cysteine protease ATG4</fullName>
        <ecNumber evidence="1">3.4.22.-</ecNumber>
    </recommendedName>
    <alternativeName>
        <fullName evidence="4">Autophagy-related protein 4</fullName>
    </alternativeName>
</protein>
<proteinExistence type="inferred from homology"/>
<keyword id="KW-0072">Autophagy</keyword>
<keyword id="KW-0963">Cytoplasm</keyword>
<keyword id="KW-0378">Hydrolase</keyword>
<keyword id="KW-0539">Nucleus</keyword>
<keyword id="KW-0645">Protease</keyword>
<keyword id="KW-0653">Protein transport</keyword>
<keyword id="KW-0788">Thiol protease</keyword>
<keyword id="KW-0813">Transport</keyword>
<accession>W0TGM7</accession>
<evidence type="ECO:0000250" key="1">
    <source>
        <dbReference type="UniProtKB" id="P53867"/>
    </source>
</evidence>
<evidence type="ECO:0000250" key="2">
    <source>
        <dbReference type="UniProtKB" id="Q9Y4P1"/>
    </source>
</evidence>
<evidence type="ECO:0000269" key="3">
    <source>
    </source>
</evidence>
<evidence type="ECO:0000303" key="4">
    <source>
    </source>
</evidence>
<evidence type="ECO:0000305" key="5"/>
<dbReference type="EC" id="3.4.22.-" evidence="1"/>
<dbReference type="EMBL" id="AP012217">
    <property type="protein sequence ID" value="BAO41269.1"/>
    <property type="molecule type" value="Genomic_DNA"/>
</dbReference>
<dbReference type="RefSeq" id="XP_022677064.1">
    <property type="nucleotide sequence ID" value="XM_022820619.1"/>
</dbReference>
<dbReference type="SMR" id="W0TGM7"/>
<dbReference type="GeneID" id="34717206"/>
<dbReference type="VEuPathDB" id="FungiDB:KLMA_50615"/>
<dbReference type="OrthoDB" id="2960936at2759"/>
<dbReference type="Proteomes" id="UP000065495">
    <property type="component" value="Chromosome 5"/>
</dbReference>
<dbReference type="GO" id="GO:0005634">
    <property type="term" value="C:nucleus"/>
    <property type="evidence" value="ECO:0007669"/>
    <property type="project" value="UniProtKB-SubCell"/>
</dbReference>
<dbReference type="GO" id="GO:0000407">
    <property type="term" value="C:phagophore assembly site"/>
    <property type="evidence" value="ECO:0007669"/>
    <property type="project" value="UniProtKB-SubCell"/>
</dbReference>
<dbReference type="GO" id="GO:0004197">
    <property type="term" value="F:cysteine-type endopeptidase activity"/>
    <property type="evidence" value="ECO:0007669"/>
    <property type="project" value="TreeGrafter"/>
</dbReference>
<dbReference type="GO" id="GO:0019786">
    <property type="term" value="F:protein-phosphatidylethanolamide deconjugating activity"/>
    <property type="evidence" value="ECO:0007669"/>
    <property type="project" value="InterPro"/>
</dbReference>
<dbReference type="GO" id="GO:0035973">
    <property type="term" value="P:aggrephagy"/>
    <property type="evidence" value="ECO:0007669"/>
    <property type="project" value="TreeGrafter"/>
</dbReference>
<dbReference type="GO" id="GO:0000045">
    <property type="term" value="P:autophagosome assembly"/>
    <property type="evidence" value="ECO:0007669"/>
    <property type="project" value="TreeGrafter"/>
</dbReference>
<dbReference type="GO" id="GO:0000423">
    <property type="term" value="P:mitophagy"/>
    <property type="evidence" value="ECO:0007669"/>
    <property type="project" value="TreeGrafter"/>
</dbReference>
<dbReference type="GO" id="GO:0034727">
    <property type="term" value="P:piecemeal microautophagy of the nucleus"/>
    <property type="evidence" value="ECO:0007669"/>
    <property type="project" value="TreeGrafter"/>
</dbReference>
<dbReference type="GO" id="GO:0016485">
    <property type="term" value="P:protein processing"/>
    <property type="evidence" value="ECO:0007669"/>
    <property type="project" value="TreeGrafter"/>
</dbReference>
<dbReference type="GO" id="GO:0015031">
    <property type="term" value="P:protein transport"/>
    <property type="evidence" value="ECO:0007669"/>
    <property type="project" value="UniProtKB-KW"/>
</dbReference>
<dbReference type="InterPro" id="IPR038765">
    <property type="entry name" value="Papain-like_cys_pep_sf"/>
</dbReference>
<dbReference type="InterPro" id="IPR005078">
    <property type="entry name" value="Peptidase_C54"/>
</dbReference>
<dbReference type="InterPro" id="IPR046792">
    <property type="entry name" value="Peptidase_C54_cat"/>
</dbReference>
<dbReference type="PANTHER" id="PTHR22624:SF49">
    <property type="entry name" value="CYSTEINE PROTEASE"/>
    <property type="match status" value="1"/>
</dbReference>
<dbReference type="PANTHER" id="PTHR22624">
    <property type="entry name" value="CYSTEINE PROTEASE ATG4"/>
    <property type="match status" value="1"/>
</dbReference>
<dbReference type="Pfam" id="PF03416">
    <property type="entry name" value="Peptidase_C54"/>
    <property type="match status" value="1"/>
</dbReference>
<dbReference type="SUPFAM" id="SSF54001">
    <property type="entry name" value="Cysteine proteinases"/>
    <property type="match status" value="1"/>
</dbReference>
<feature type="chain" id="PRO_0000443874" description="Cysteine protease ATG4">
    <location>
        <begin position="1"/>
        <end position="451"/>
    </location>
</feature>
<feature type="active site" description="Nucleophile" evidence="2">
    <location>
        <position position="122"/>
    </location>
</feature>
<feature type="active site" evidence="2">
    <location>
        <position position="297"/>
    </location>
</feature>
<feature type="active site" evidence="2">
    <location>
        <position position="299"/>
    </location>
</feature>
<comment type="function">
    <text evidence="1 3">Cysteine protease that plays a key role in cytoplasm to vacuole transport (Cvt) and autophagy by mediating both proteolytic activation and delipidation of ATG8 (PubMed:26442587). Required for selective autophagic degradation of the nucleus (nucleophagy) as well as for mitophagy which contributes to regulate mitochondrial quantity and quality by eliminating the mitochondria to a basal level to fulfill cellular energy requirements and preventing excess ROS production (By similarity). The protease activity is required for proteolytic activation of ATG8: cleaves the C-terminal amino acid of ATG8 to reveal a C-terminal glycine (PubMed:26442587). ATG8 ubiquitin-like activity requires the exposure of the glycine at the C-terminus for its conjugation to phosphatidylethanolamine (PE) and its insertion to membranes, which is necessary for autophagy (PubMed:26442587). The ATG8-PE conjugate mediates tethering between adjacent membranes and stimulates membrane hemifusion, leading to expansion of the autophagosomal membrane during autophagy. In addition to the protease activity, also catalyzes deconjugation of PE-conjugated forms of ATG8 during macroautophagy: ATG8 delipidation is required to release the protein from membranes, which facilitates multiple events during macroautophagy, and especially for efficient autophagosome biogenesis, the assembly of ATG9-containing tubulovesicular clusters into phagophores/autophagosomes, and for the disassembly of PAS-associated ATG components. ATG8 delipidation by ATG4 also recycles ATG8-PE generated on inappropriate membranes to maintain a reservoir of unlipidated ATG8 that is required for autophagosome formation at the PAS (By similarity).</text>
</comment>
<comment type="catalytic activity">
    <reaction evidence="1">
        <text>[protein]-C-terminal L-amino acid-glycyl-phosphatidylethanolamide + H2O = [protein]-C-terminal L-amino acid-glycine + a 1,2-diacyl-sn-glycero-3-phosphoethanolamine</text>
        <dbReference type="Rhea" id="RHEA:67548"/>
        <dbReference type="Rhea" id="RHEA-COMP:17323"/>
        <dbReference type="Rhea" id="RHEA-COMP:17324"/>
        <dbReference type="ChEBI" id="CHEBI:15377"/>
        <dbReference type="ChEBI" id="CHEBI:64612"/>
        <dbReference type="ChEBI" id="CHEBI:172940"/>
        <dbReference type="ChEBI" id="CHEBI:172941"/>
    </reaction>
    <physiologicalReaction direction="left-to-right" evidence="1">
        <dbReference type="Rhea" id="RHEA:67549"/>
    </physiologicalReaction>
</comment>
<comment type="subunit">
    <text evidence="1">Interacts with ATG8 (By similarity).</text>
</comment>
<comment type="subcellular location">
    <subcellularLocation>
        <location evidence="1">Cytoplasm</location>
    </subcellularLocation>
    <subcellularLocation>
        <location evidence="1">Nucleus</location>
    </subcellularLocation>
    <subcellularLocation>
        <location evidence="1">Preautophagosomal structure</location>
    </subcellularLocation>
</comment>
<comment type="disruption phenotype">
    <text evidence="3">Impairs the formation of preautophagosomal structures (PubMed:26442587). Blocks the maturation and subsequent localization of ATG8 to autophagic membranes (PubMed:26442587).</text>
</comment>
<comment type="miscellaneous">
    <text evidence="3">Kluyveromyces marxianus proteins are shorter in length and have a more ordered secondary structure than their S.cerevisiae counterparts, which might contribute to the superior thermotolerance and solubility (PubMed:26442587). K.marxianus could be therefore useful as a new model organism for further elucidation of the molecular details of autophagy (PubMed:26442587).</text>
</comment>
<comment type="similarity">
    <text evidence="5">Belongs to the peptidase C54 family.</text>
</comment>